<gene>
    <name evidence="1" type="primary">rplI</name>
    <name type="synonym">rl9</name>
    <name type="ordered locus">CPn_0953</name>
    <name type="ordered locus">CP_0906</name>
    <name type="ordered locus">CpB0990</name>
</gene>
<dbReference type="EMBL" id="AE001363">
    <property type="protein sequence ID" value="AAD19091.1"/>
    <property type="molecule type" value="Genomic_DNA"/>
</dbReference>
<dbReference type="EMBL" id="AE002161">
    <property type="protein sequence ID" value="AAF38691.1"/>
    <property type="molecule type" value="Genomic_DNA"/>
</dbReference>
<dbReference type="EMBL" id="BA000008">
    <property type="protein sequence ID" value="BAA99161.1"/>
    <property type="molecule type" value="Genomic_DNA"/>
</dbReference>
<dbReference type="EMBL" id="AE009440">
    <property type="protein sequence ID" value="AAP98919.1"/>
    <property type="molecule type" value="Genomic_DNA"/>
</dbReference>
<dbReference type="PIR" id="G86609">
    <property type="entry name" value="G86609"/>
</dbReference>
<dbReference type="PIR" id="H72014">
    <property type="entry name" value="H72014"/>
</dbReference>
<dbReference type="RefSeq" id="NP_225148.1">
    <property type="nucleotide sequence ID" value="NC_000922.1"/>
</dbReference>
<dbReference type="RefSeq" id="WP_010883588.1">
    <property type="nucleotide sequence ID" value="NZ_LN847257.1"/>
</dbReference>
<dbReference type="SMR" id="Q9Z6V3"/>
<dbReference type="STRING" id="406984.CPK_ORF00368"/>
<dbReference type="GeneID" id="45051010"/>
<dbReference type="KEGG" id="cpa:CP_0906"/>
<dbReference type="KEGG" id="cpj:rl9"/>
<dbReference type="KEGG" id="cpn:CPn_0953"/>
<dbReference type="KEGG" id="cpt:CpB0990"/>
<dbReference type="PATRIC" id="fig|115713.3.peg.1043"/>
<dbReference type="eggNOG" id="COG0359">
    <property type="taxonomic scope" value="Bacteria"/>
</dbReference>
<dbReference type="HOGENOM" id="CLU_078938_3_0_0"/>
<dbReference type="OrthoDB" id="9788336at2"/>
<dbReference type="Proteomes" id="UP000000583">
    <property type="component" value="Chromosome"/>
</dbReference>
<dbReference type="Proteomes" id="UP000000801">
    <property type="component" value="Chromosome"/>
</dbReference>
<dbReference type="GO" id="GO:1990904">
    <property type="term" value="C:ribonucleoprotein complex"/>
    <property type="evidence" value="ECO:0007669"/>
    <property type="project" value="UniProtKB-KW"/>
</dbReference>
<dbReference type="GO" id="GO:0005840">
    <property type="term" value="C:ribosome"/>
    <property type="evidence" value="ECO:0007669"/>
    <property type="project" value="UniProtKB-KW"/>
</dbReference>
<dbReference type="GO" id="GO:0019843">
    <property type="term" value="F:rRNA binding"/>
    <property type="evidence" value="ECO:0007669"/>
    <property type="project" value="UniProtKB-UniRule"/>
</dbReference>
<dbReference type="GO" id="GO:0003735">
    <property type="term" value="F:structural constituent of ribosome"/>
    <property type="evidence" value="ECO:0007669"/>
    <property type="project" value="InterPro"/>
</dbReference>
<dbReference type="GO" id="GO:0006412">
    <property type="term" value="P:translation"/>
    <property type="evidence" value="ECO:0007669"/>
    <property type="project" value="UniProtKB-UniRule"/>
</dbReference>
<dbReference type="Gene3D" id="3.10.430.100">
    <property type="entry name" value="Ribosomal protein L9, C-terminal domain"/>
    <property type="match status" value="1"/>
</dbReference>
<dbReference type="Gene3D" id="3.40.5.10">
    <property type="entry name" value="Ribosomal protein L9, N-terminal domain"/>
    <property type="match status" value="1"/>
</dbReference>
<dbReference type="HAMAP" id="MF_00503">
    <property type="entry name" value="Ribosomal_bL9"/>
    <property type="match status" value="1"/>
</dbReference>
<dbReference type="InterPro" id="IPR000244">
    <property type="entry name" value="Ribosomal_bL9"/>
</dbReference>
<dbReference type="InterPro" id="IPR009027">
    <property type="entry name" value="Ribosomal_bL9/RNase_H1_N"/>
</dbReference>
<dbReference type="InterPro" id="IPR020594">
    <property type="entry name" value="Ribosomal_bL9_bac/chp"/>
</dbReference>
<dbReference type="InterPro" id="IPR020069">
    <property type="entry name" value="Ribosomal_bL9_C"/>
</dbReference>
<dbReference type="InterPro" id="IPR036791">
    <property type="entry name" value="Ribosomal_bL9_C_sf"/>
</dbReference>
<dbReference type="InterPro" id="IPR020070">
    <property type="entry name" value="Ribosomal_bL9_N"/>
</dbReference>
<dbReference type="InterPro" id="IPR036935">
    <property type="entry name" value="Ribosomal_bL9_N_sf"/>
</dbReference>
<dbReference type="NCBIfam" id="TIGR00158">
    <property type="entry name" value="L9"/>
    <property type="match status" value="1"/>
</dbReference>
<dbReference type="PANTHER" id="PTHR21368">
    <property type="entry name" value="50S RIBOSOMAL PROTEIN L9"/>
    <property type="match status" value="1"/>
</dbReference>
<dbReference type="Pfam" id="PF03948">
    <property type="entry name" value="Ribosomal_L9_C"/>
    <property type="match status" value="1"/>
</dbReference>
<dbReference type="Pfam" id="PF01281">
    <property type="entry name" value="Ribosomal_L9_N"/>
    <property type="match status" value="1"/>
</dbReference>
<dbReference type="SUPFAM" id="SSF55658">
    <property type="entry name" value="L9 N-domain-like"/>
    <property type="match status" value="1"/>
</dbReference>
<dbReference type="SUPFAM" id="SSF55653">
    <property type="entry name" value="Ribosomal protein L9 C-domain"/>
    <property type="match status" value="1"/>
</dbReference>
<dbReference type="PROSITE" id="PS00651">
    <property type="entry name" value="RIBOSOMAL_L9"/>
    <property type="match status" value="1"/>
</dbReference>
<protein>
    <recommendedName>
        <fullName evidence="1">Large ribosomal subunit protein bL9</fullName>
    </recommendedName>
    <alternativeName>
        <fullName evidence="2">50S ribosomal protein L9</fullName>
    </alternativeName>
</protein>
<accession>Q9Z6V3</accession>
<accession>Q9JQ51</accession>
<organism>
    <name type="scientific">Chlamydia pneumoniae</name>
    <name type="common">Chlamydophila pneumoniae</name>
    <dbReference type="NCBI Taxonomy" id="83558"/>
    <lineage>
        <taxon>Bacteria</taxon>
        <taxon>Pseudomonadati</taxon>
        <taxon>Chlamydiota</taxon>
        <taxon>Chlamydiia</taxon>
        <taxon>Chlamydiales</taxon>
        <taxon>Chlamydiaceae</taxon>
        <taxon>Chlamydia/Chlamydophila group</taxon>
        <taxon>Chlamydia</taxon>
    </lineage>
</organism>
<feature type="chain" id="PRO_0000176629" description="Large ribosomal subunit protein bL9">
    <location>
        <begin position="1"/>
        <end position="169"/>
    </location>
</feature>
<proteinExistence type="inferred from homology"/>
<comment type="function">
    <text evidence="1">Binds to the 23S rRNA.</text>
</comment>
<comment type="similarity">
    <text evidence="1">Belongs to the bacterial ribosomal protein bL9 family.</text>
</comment>
<sequence length="169" mass="18723">MKQQLLLLEDVDGLGRSGDLITARPGYVRNYLIPKKKAVIAGAGTLRLQAKLKEQRLIQAAADKADSERIAQALKDIVLEFQVRVDPDNNMYGSVTIADIIAEAAKKNIFLVRKNFPHAHYAIKNLGKKNIPLKLKEEVTATLLVEVTSDNEYVTVLAQGKQTEENQEG</sequence>
<reference key="1">
    <citation type="journal article" date="1999" name="Nat. Genet.">
        <title>Comparative genomes of Chlamydia pneumoniae and C. trachomatis.</title>
        <authorList>
            <person name="Kalman S."/>
            <person name="Mitchell W.P."/>
            <person name="Marathe R."/>
            <person name="Lammel C.J."/>
            <person name="Fan J."/>
            <person name="Hyman R.W."/>
            <person name="Olinger L."/>
            <person name="Grimwood J."/>
            <person name="Davis R.W."/>
            <person name="Stephens R.S."/>
        </authorList>
    </citation>
    <scope>NUCLEOTIDE SEQUENCE [LARGE SCALE GENOMIC DNA]</scope>
    <source>
        <strain>CWL029</strain>
    </source>
</reference>
<reference key="2">
    <citation type="journal article" date="2000" name="Nucleic Acids Res.">
        <title>Genome sequences of Chlamydia trachomatis MoPn and Chlamydia pneumoniae AR39.</title>
        <authorList>
            <person name="Read T.D."/>
            <person name="Brunham R.C."/>
            <person name="Shen C."/>
            <person name="Gill S.R."/>
            <person name="Heidelberg J.F."/>
            <person name="White O."/>
            <person name="Hickey E.K."/>
            <person name="Peterson J.D."/>
            <person name="Utterback T.R."/>
            <person name="Berry K.J."/>
            <person name="Bass S."/>
            <person name="Linher K.D."/>
            <person name="Weidman J.F."/>
            <person name="Khouri H.M."/>
            <person name="Craven B."/>
            <person name="Bowman C."/>
            <person name="Dodson R.J."/>
            <person name="Gwinn M.L."/>
            <person name="Nelson W.C."/>
            <person name="DeBoy R.T."/>
            <person name="Kolonay J.F."/>
            <person name="McClarty G."/>
            <person name="Salzberg S.L."/>
            <person name="Eisen J.A."/>
            <person name="Fraser C.M."/>
        </authorList>
    </citation>
    <scope>NUCLEOTIDE SEQUENCE [LARGE SCALE GENOMIC DNA]</scope>
    <source>
        <strain>AR39</strain>
    </source>
</reference>
<reference key="3">
    <citation type="journal article" date="2000" name="Nucleic Acids Res.">
        <title>Comparison of whole genome sequences of Chlamydia pneumoniae J138 from Japan and CWL029 from USA.</title>
        <authorList>
            <person name="Shirai M."/>
            <person name="Hirakawa H."/>
            <person name="Kimoto M."/>
            <person name="Tabuchi M."/>
            <person name="Kishi F."/>
            <person name="Ouchi K."/>
            <person name="Shiba T."/>
            <person name="Ishii K."/>
            <person name="Hattori M."/>
            <person name="Kuhara S."/>
            <person name="Nakazawa T."/>
        </authorList>
    </citation>
    <scope>NUCLEOTIDE SEQUENCE [LARGE SCALE GENOMIC DNA]</scope>
    <source>
        <strain>J138</strain>
    </source>
</reference>
<reference key="4">
    <citation type="submission" date="2002-05" db="EMBL/GenBank/DDBJ databases">
        <title>The genome sequence of Chlamydia pneumoniae TW183 and comparison with other Chlamydia strains based on whole genome sequence analysis.</title>
        <authorList>
            <person name="Geng M.M."/>
            <person name="Schuhmacher A."/>
            <person name="Muehldorfer I."/>
            <person name="Bensch K.W."/>
            <person name="Schaefer K.P."/>
            <person name="Schneider S."/>
            <person name="Pohl T."/>
            <person name="Essig A."/>
            <person name="Marre R."/>
            <person name="Melchers K."/>
        </authorList>
    </citation>
    <scope>NUCLEOTIDE SEQUENCE [LARGE SCALE GENOMIC DNA]</scope>
    <source>
        <strain>TW-183</strain>
    </source>
</reference>
<evidence type="ECO:0000255" key="1">
    <source>
        <dbReference type="HAMAP-Rule" id="MF_00503"/>
    </source>
</evidence>
<evidence type="ECO:0000305" key="2"/>
<name>RL9_CHLPN</name>
<keyword id="KW-0687">Ribonucleoprotein</keyword>
<keyword id="KW-0689">Ribosomal protein</keyword>
<keyword id="KW-0694">RNA-binding</keyword>
<keyword id="KW-0699">rRNA-binding</keyword>